<reference key="1">
    <citation type="journal article" date="2007" name="BMC Plant Biol.">
        <title>Complete plastid genome sequences suggest strong selection for retention of photosynthetic genes in the parasitic plant genus Cuscuta.</title>
        <authorList>
            <person name="McNeal J.R."/>
            <person name="Kuehl J.V."/>
            <person name="Boore J.L."/>
            <person name="dePamphilis C.W."/>
        </authorList>
    </citation>
    <scope>NUCLEOTIDE SEQUENCE [LARGE SCALE GENOMIC DNA]</scope>
</reference>
<keyword id="KW-0150">Chloroplast</keyword>
<keyword id="KW-0934">Plastid</keyword>
<keyword id="KW-0687">Ribonucleoprotein</keyword>
<keyword id="KW-0689">Ribosomal protein</keyword>
<keyword id="KW-0694">RNA-binding</keyword>
<keyword id="KW-0699">rRNA-binding</keyword>
<proteinExistence type="inferred from homology"/>
<accession>A7Y3J0</accession>
<feature type="chain" id="PRO_0000354577" description="Large ribosomal subunit protein uL22c">
    <location>
        <begin position="1"/>
        <end position="159"/>
    </location>
</feature>
<dbReference type="EMBL" id="EU118126">
    <property type="protein sequence ID" value="ABV02387.1"/>
    <property type="molecule type" value="Genomic_DNA"/>
</dbReference>
<dbReference type="RefSeq" id="YP_001468347.1">
    <property type="nucleotide sequence ID" value="NC_009808.1"/>
</dbReference>
<dbReference type="SMR" id="A7Y3J0"/>
<dbReference type="GeneID" id="5601295"/>
<dbReference type="GO" id="GO:0009507">
    <property type="term" value="C:chloroplast"/>
    <property type="evidence" value="ECO:0007669"/>
    <property type="project" value="UniProtKB-SubCell"/>
</dbReference>
<dbReference type="GO" id="GO:0015934">
    <property type="term" value="C:large ribosomal subunit"/>
    <property type="evidence" value="ECO:0007669"/>
    <property type="project" value="InterPro"/>
</dbReference>
<dbReference type="GO" id="GO:0019843">
    <property type="term" value="F:rRNA binding"/>
    <property type="evidence" value="ECO:0007669"/>
    <property type="project" value="UniProtKB-UniRule"/>
</dbReference>
<dbReference type="GO" id="GO:0003735">
    <property type="term" value="F:structural constituent of ribosome"/>
    <property type="evidence" value="ECO:0007669"/>
    <property type="project" value="InterPro"/>
</dbReference>
<dbReference type="GO" id="GO:0006412">
    <property type="term" value="P:translation"/>
    <property type="evidence" value="ECO:0007669"/>
    <property type="project" value="UniProtKB-UniRule"/>
</dbReference>
<dbReference type="CDD" id="cd00336">
    <property type="entry name" value="Ribosomal_L22"/>
    <property type="match status" value="1"/>
</dbReference>
<dbReference type="FunFam" id="3.90.470.10:FF:000006">
    <property type="entry name" value="50S ribosomal protein L22, chloroplastic"/>
    <property type="match status" value="1"/>
</dbReference>
<dbReference type="Gene3D" id="3.90.470.10">
    <property type="entry name" value="Ribosomal protein L22/L17"/>
    <property type="match status" value="1"/>
</dbReference>
<dbReference type="HAMAP" id="MF_01331_B">
    <property type="entry name" value="Ribosomal_uL22_B"/>
    <property type="match status" value="1"/>
</dbReference>
<dbReference type="InterPro" id="IPR001063">
    <property type="entry name" value="Ribosomal_uL22"/>
</dbReference>
<dbReference type="InterPro" id="IPR005727">
    <property type="entry name" value="Ribosomal_uL22_bac/chlpt-type"/>
</dbReference>
<dbReference type="InterPro" id="IPR047867">
    <property type="entry name" value="Ribosomal_uL22_bac/org-type"/>
</dbReference>
<dbReference type="InterPro" id="IPR018260">
    <property type="entry name" value="Ribosomal_uL22_CS"/>
</dbReference>
<dbReference type="InterPro" id="IPR036394">
    <property type="entry name" value="Ribosomal_uL22_sf"/>
</dbReference>
<dbReference type="NCBIfam" id="TIGR01044">
    <property type="entry name" value="rplV_bact"/>
    <property type="match status" value="1"/>
</dbReference>
<dbReference type="PANTHER" id="PTHR13501">
    <property type="entry name" value="CHLOROPLAST 50S RIBOSOMAL PROTEIN L22-RELATED"/>
    <property type="match status" value="1"/>
</dbReference>
<dbReference type="PANTHER" id="PTHR13501:SF10">
    <property type="entry name" value="LARGE RIBOSOMAL SUBUNIT PROTEIN UL22M"/>
    <property type="match status" value="1"/>
</dbReference>
<dbReference type="Pfam" id="PF00237">
    <property type="entry name" value="Ribosomal_L22"/>
    <property type="match status" value="1"/>
</dbReference>
<dbReference type="SUPFAM" id="SSF54843">
    <property type="entry name" value="Ribosomal protein L22"/>
    <property type="match status" value="1"/>
</dbReference>
<dbReference type="PROSITE" id="PS00464">
    <property type="entry name" value="RIBOSOMAL_L22"/>
    <property type="match status" value="1"/>
</dbReference>
<protein>
    <recommendedName>
        <fullName evidence="2">Large ribosomal subunit protein uL22c</fullName>
    </recommendedName>
    <alternativeName>
        <fullName>50S ribosomal protein L22, chloroplastic</fullName>
    </alternativeName>
</protein>
<sequence>MYQVLKKKKPEVYALGQHISMSADKARRVIDQIRGRSYEETLMILELMPYRAGYPIFKLVYSAAANASYTMASNEANLVISKAEVNEGTTVKKFKPRARGRSYPIKRTTCHITIVLKDISLDDSESIELNLLKKPRWKKNSTAMAYYDLHNRGGLWDKK</sequence>
<gene>
    <name type="primary">rpl22</name>
</gene>
<name>RK22_IPOPU</name>
<evidence type="ECO:0000250" key="1"/>
<evidence type="ECO:0000305" key="2"/>
<organism>
    <name type="scientific">Ipomoea purpurea</name>
    <name type="common">Common morning glory</name>
    <name type="synonym">Pharbitis purpurea</name>
    <dbReference type="NCBI Taxonomy" id="4121"/>
    <lineage>
        <taxon>Eukaryota</taxon>
        <taxon>Viridiplantae</taxon>
        <taxon>Streptophyta</taxon>
        <taxon>Embryophyta</taxon>
        <taxon>Tracheophyta</taxon>
        <taxon>Spermatophyta</taxon>
        <taxon>Magnoliopsida</taxon>
        <taxon>eudicotyledons</taxon>
        <taxon>Gunneridae</taxon>
        <taxon>Pentapetalae</taxon>
        <taxon>asterids</taxon>
        <taxon>lamiids</taxon>
        <taxon>Solanales</taxon>
        <taxon>Convolvulaceae</taxon>
        <taxon>Ipomoeeae</taxon>
        <taxon>Ipomoea</taxon>
    </lineage>
</organism>
<comment type="function">
    <text evidence="1">This protein binds specifically to 23S rRNA.</text>
</comment>
<comment type="function">
    <text evidence="1">The globular domain of the protein is located near the polypeptide exit tunnel on the outside of the subunit, while an extended beta-hairpin is found that lines the wall of the exit tunnel in the center of the 70S ribosome.</text>
</comment>
<comment type="subunit">
    <text evidence="1">Part of the 50S ribosomal subunit.</text>
</comment>
<comment type="subcellular location">
    <subcellularLocation>
        <location>Plastid</location>
        <location>Chloroplast</location>
    </subcellularLocation>
</comment>
<comment type="similarity">
    <text evidence="2">Belongs to the universal ribosomal protein uL22 family.</text>
</comment>
<geneLocation type="chloroplast"/>